<protein>
    <recommendedName>
        <fullName evidence="1">DNA-directed RNA polymerase subunit beta</fullName>
        <shortName evidence="1">RNAP subunit beta</shortName>
        <ecNumber evidence="1">2.7.7.6</ecNumber>
    </recommendedName>
    <alternativeName>
        <fullName evidence="1">RNA polymerase subunit beta</fullName>
    </alternativeName>
    <alternativeName>
        <fullName evidence="1">Transcriptase subunit beta</fullName>
    </alternativeName>
</protein>
<comment type="function">
    <text evidence="1">DNA-dependent RNA polymerase catalyzes the transcription of DNA into RNA using the four ribonucleoside triphosphates as substrates.</text>
</comment>
<comment type="catalytic activity">
    <reaction evidence="1">
        <text>RNA(n) + a ribonucleoside 5'-triphosphate = RNA(n+1) + diphosphate</text>
        <dbReference type="Rhea" id="RHEA:21248"/>
        <dbReference type="Rhea" id="RHEA-COMP:14527"/>
        <dbReference type="Rhea" id="RHEA-COMP:17342"/>
        <dbReference type="ChEBI" id="CHEBI:33019"/>
        <dbReference type="ChEBI" id="CHEBI:61557"/>
        <dbReference type="ChEBI" id="CHEBI:140395"/>
        <dbReference type="EC" id="2.7.7.6"/>
    </reaction>
</comment>
<comment type="subunit">
    <text evidence="1">The RNAP catalytic core consists of 2 alpha, 1 beta, 1 beta' and 1 omega subunit. When a sigma factor is associated with the core the holoenzyme is formed, which can initiate transcription.</text>
</comment>
<comment type="similarity">
    <text evidence="1">Belongs to the RNA polymerase beta chain family.</text>
</comment>
<organism>
    <name type="scientific">Ureaplasma urealyticum serovar 10 (strain ATCC 33699 / Western)</name>
    <dbReference type="NCBI Taxonomy" id="565575"/>
    <lineage>
        <taxon>Bacteria</taxon>
        <taxon>Bacillati</taxon>
        <taxon>Mycoplasmatota</taxon>
        <taxon>Mycoplasmoidales</taxon>
        <taxon>Mycoplasmoidaceae</taxon>
        <taxon>Ureaplasma</taxon>
    </lineage>
</organism>
<evidence type="ECO:0000255" key="1">
    <source>
        <dbReference type="HAMAP-Rule" id="MF_01321"/>
    </source>
</evidence>
<proteinExistence type="inferred from homology"/>
<reference key="1">
    <citation type="submission" date="2008-10" db="EMBL/GenBank/DDBJ databases">
        <title>Genome sequence of Ureaplasma urealyticum serovar 10 ATCC-33699.</title>
        <authorList>
            <person name="Shrivastava S."/>
            <person name="Methe B.A."/>
            <person name="Glass J."/>
            <person name="White K."/>
            <person name="Duffy L.B."/>
        </authorList>
    </citation>
    <scope>NUCLEOTIDE SEQUENCE [LARGE SCALE GENOMIC DNA]</scope>
    <source>
        <strain>ATCC 33699 / Western</strain>
    </source>
</reference>
<accession>B5ZAZ3</accession>
<feature type="chain" id="PRO_1000141747" description="DNA-directed RNA polymerase subunit beta">
    <location>
        <begin position="1"/>
        <end position="1434"/>
    </location>
</feature>
<gene>
    <name evidence="1" type="primary">rpoB</name>
    <name type="ordered locus">UUR10_0178</name>
</gene>
<sequence>MQNNKNYTEKFITDKVTRRDYSKIKSNFEGPNLLEIQVESFKRFMEKDLKEVISGIFPLKSPQGKYTLAFKGLKIKQPTKDESACRDEGKTFETPIYIDLELTDNYTGEVKRAQRNAKTGEDGIYLGAIPKMTEKGTFVINGIEKFVISQIVRSPGIYVLGKSSIKLNGSRKRLFEGKICEIYPSKGTLMLGYIPKDRHNIQIVARDSSGDNAQTFSITTLLKAFGLTSAEILKIFNNEKEIRESLEVEKYSPEYIFENSQENEIIFKIYSDAHDIHEKADRRESNNKLREEYIEQGSPLLSKLKELIFDYVEKSDEIDALLHENKDVEDANFIKNNKKLYDEREEIINCIISEKAAKDIVELLGINIKNVETLRHLGKASYQLALQQHFFNKRLYDISSAGRYKFEKKLLLSERLYQKVIARDIIDKKNNILIPKDTLITKEHIELIKKESRDKNIKWTRKINLLPIALETEIEQFLEYESIAVYKDNDLRDETTEIVGLAPGCKLQTLTVADLVATTSYIYNLNYEIGEFDDIDHLGNKRLKLIHELLRARIATSMARIEKFINEKLAISDGSSNNITNVNDKGIDTELDREVEESDMSDEEKKKAISVKSIINTKQFQSLVKDFFNSHQLIQFIDQQNPLAELTNKRRISAMGPGGISREDPNLDIRDVHHSHYSRICPIETPEGMNIGLIMSLASLAKVDENGFIVAPYYVVEDGVVKEECKYLTAHEDDNYIIAESSVQLDENKRILDEQVVARYRGSTGLFSPHEVDFIDIVPKQVVSIAASAIPFIENDDGARALMGSNMQRQATPLIKPYAPIVGTGTEFKIAHDSGMAVVAKNDGVVEFVDSQKIVIKNDNDKLDEYKLIKYRKSNQDTCNNQIPIVKIGQKVHKSETIGDGPAMQNGELALGRNILVGYTTWRGYNFEDAIIISERLVDQDVFTSIHIDEHTIQCMKTKNGDEEITRDMPNVSDTAKRFLDNQGIVLVGAEVHEGDVLVGKTTPRGNVETAPEDRLLQTIFGDKSKTVKDSSLKVKHGQEGIVAAVKRIKSTDENGSELPDDVIEIIKVYIVQKRKIQVGDKMAGRHGNKGIVSKVVPIQDMPFLKDGTPLDIMLNPLGVPSRMNIGQILELHLGYAAAEIGKKQLIQIAIDQLGYEKYISLFGINEIIAKKLYEKITNLIKHKQAKQPKDIDLIDITIVLKELGLSYDDIGIKISTPVFDGANHDDIVDIMNEANIDIENNKGKQVLYDGRTGEAFDGLISVGLTYMLKLDHMVDDKIHSRSVGPYSKITQQPLGGKSQNGGQRFGEMEVWALEAYGAAYNLLEILTIKSDDVQGRNQAYNAIIKGHDVVADGMPESFKLLTKQMQGLGLCITVETKDDRMIDINEYTLNQNRLNNDDDEVIFDESIKEINENNQQVFNTDFNDNDYDDEENF</sequence>
<name>RPOB_UREU1</name>
<keyword id="KW-0240">DNA-directed RNA polymerase</keyword>
<keyword id="KW-0548">Nucleotidyltransferase</keyword>
<keyword id="KW-0804">Transcription</keyword>
<keyword id="KW-0808">Transferase</keyword>
<dbReference type="EC" id="2.7.7.6" evidence="1"/>
<dbReference type="EMBL" id="CP001184">
    <property type="protein sequence ID" value="ACI59846.1"/>
    <property type="molecule type" value="Genomic_DNA"/>
</dbReference>
<dbReference type="RefSeq" id="WP_004025875.1">
    <property type="nucleotide sequence ID" value="NC_011374.1"/>
</dbReference>
<dbReference type="SMR" id="B5ZAZ3"/>
<dbReference type="STRING" id="565575.UUR10_0178"/>
<dbReference type="KEGG" id="uue:UUR10_0178"/>
<dbReference type="eggNOG" id="COG0085">
    <property type="taxonomic scope" value="Bacteria"/>
</dbReference>
<dbReference type="HOGENOM" id="CLU_000524_4_1_14"/>
<dbReference type="OrthoDB" id="9803954at2"/>
<dbReference type="Proteomes" id="UP000002018">
    <property type="component" value="Chromosome"/>
</dbReference>
<dbReference type="GO" id="GO:0000428">
    <property type="term" value="C:DNA-directed RNA polymerase complex"/>
    <property type="evidence" value="ECO:0007669"/>
    <property type="project" value="UniProtKB-KW"/>
</dbReference>
<dbReference type="GO" id="GO:0003677">
    <property type="term" value="F:DNA binding"/>
    <property type="evidence" value="ECO:0007669"/>
    <property type="project" value="UniProtKB-UniRule"/>
</dbReference>
<dbReference type="GO" id="GO:0003899">
    <property type="term" value="F:DNA-directed RNA polymerase activity"/>
    <property type="evidence" value="ECO:0007669"/>
    <property type="project" value="UniProtKB-UniRule"/>
</dbReference>
<dbReference type="GO" id="GO:0032549">
    <property type="term" value="F:ribonucleoside binding"/>
    <property type="evidence" value="ECO:0007669"/>
    <property type="project" value="InterPro"/>
</dbReference>
<dbReference type="GO" id="GO:0006351">
    <property type="term" value="P:DNA-templated transcription"/>
    <property type="evidence" value="ECO:0007669"/>
    <property type="project" value="UniProtKB-UniRule"/>
</dbReference>
<dbReference type="CDD" id="cd00653">
    <property type="entry name" value="RNA_pol_B_RPB2"/>
    <property type="match status" value="1"/>
</dbReference>
<dbReference type="Gene3D" id="2.40.50.100">
    <property type="match status" value="1"/>
</dbReference>
<dbReference type="Gene3D" id="3.90.1100.10">
    <property type="match status" value="2"/>
</dbReference>
<dbReference type="Gene3D" id="2.30.150.10">
    <property type="entry name" value="DNA-directed RNA polymerase, beta subunit, external 1 domain"/>
    <property type="match status" value="1"/>
</dbReference>
<dbReference type="Gene3D" id="2.40.270.10">
    <property type="entry name" value="DNA-directed RNA polymerase, subunit 2, domain 6"/>
    <property type="match status" value="2"/>
</dbReference>
<dbReference type="Gene3D" id="3.90.1800.10">
    <property type="entry name" value="RNA polymerase alpha subunit dimerisation domain"/>
    <property type="match status" value="1"/>
</dbReference>
<dbReference type="Gene3D" id="3.90.1110.10">
    <property type="entry name" value="RNA polymerase Rpb2, domain 2"/>
    <property type="match status" value="1"/>
</dbReference>
<dbReference type="HAMAP" id="MF_01321">
    <property type="entry name" value="RNApol_bact_RpoB"/>
    <property type="match status" value="1"/>
</dbReference>
<dbReference type="InterPro" id="IPR042107">
    <property type="entry name" value="DNA-dir_RNA_pol_bsu_ext_1_sf"/>
</dbReference>
<dbReference type="InterPro" id="IPR019462">
    <property type="entry name" value="DNA-dir_RNA_pol_bsu_external_1"/>
</dbReference>
<dbReference type="InterPro" id="IPR015712">
    <property type="entry name" value="DNA-dir_RNA_pol_su2"/>
</dbReference>
<dbReference type="InterPro" id="IPR007120">
    <property type="entry name" value="DNA-dir_RNAP_su2_dom"/>
</dbReference>
<dbReference type="InterPro" id="IPR037033">
    <property type="entry name" value="DNA-dir_RNAP_su2_hyb_sf"/>
</dbReference>
<dbReference type="InterPro" id="IPR010243">
    <property type="entry name" value="RNA_pol_bsu_bac"/>
</dbReference>
<dbReference type="InterPro" id="IPR007121">
    <property type="entry name" value="RNA_pol_bsu_CS"/>
</dbReference>
<dbReference type="InterPro" id="IPR007644">
    <property type="entry name" value="RNA_pol_bsu_protrusion"/>
</dbReference>
<dbReference type="InterPro" id="IPR007642">
    <property type="entry name" value="RNA_pol_Rpb2_2"/>
</dbReference>
<dbReference type="InterPro" id="IPR037034">
    <property type="entry name" value="RNA_pol_Rpb2_2_sf"/>
</dbReference>
<dbReference type="InterPro" id="IPR007645">
    <property type="entry name" value="RNA_pol_Rpb2_3"/>
</dbReference>
<dbReference type="InterPro" id="IPR007641">
    <property type="entry name" value="RNA_pol_Rpb2_7"/>
</dbReference>
<dbReference type="NCBIfam" id="NF001616">
    <property type="entry name" value="PRK00405.1"/>
    <property type="match status" value="1"/>
</dbReference>
<dbReference type="PANTHER" id="PTHR20856">
    <property type="entry name" value="DNA-DIRECTED RNA POLYMERASE I SUBUNIT 2"/>
    <property type="match status" value="1"/>
</dbReference>
<dbReference type="Pfam" id="PF04563">
    <property type="entry name" value="RNA_pol_Rpb2_1"/>
    <property type="match status" value="1"/>
</dbReference>
<dbReference type="Pfam" id="PF04561">
    <property type="entry name" value="RNA_pol_Rpb2_2"/>
    <property type="match status" value="1"/>
</dbReference>
<dbReference type="Pfam" id="PF04565">
    <property type="entry name" value="RNA_pol_Rpb2_3"/>
    <property type="match status" value="1"/>
</dbReference>
<dbReference type="Pfam" id="PF10385">
    <property type="entry name" value="RNA_pol_Rpb2_45"/>
    <property type="match status" value="1"/>
</dbReference>
<dbReference type="Pfam" id="PF00562">
    <property type="entry name" value="RNA_pol_Rpb2_6"/>
    <property type="match status" value="1"/>
</dbReference>
<dbReference type="Pfam" id="PF04560">
    <property type="entry name" value="RNA_pol_Rpb2_7"/>
    <property type="match status" value="1"/>
</dbReference>
<dbReference type="SUPFAM" id="SSF64484">
    <property type="entry name" value="beta and beta-prime subunits of DNA dependent RNA-polymerase"/>
    <property type="match status" value="1"/>
</dbReference>
<dbReference type="PROSITE" id="PS01166">
    <property type="entry name" value="RNA_POL_BETA"/>
    <property type="match status" value="1"/>
</dbReference>